<protein>
    <recommendedName>
        <fullName evidence="1">Crossover junction endodeoxyribonuclease RuvC</fullName>
        <ecNumber evidence="1">3.1.21.10</ecNumber>
    </recommendedName>
    <alternativeName>
        <fullName evidence="1">Holliday junction nuclease RuvC</fullName>
    </alternativeName>
    <alternativeName>
        <fullName evidence="1">Holliday junction resolvase RuvC</fullName>
    </alternativeName>
</protein>
<feature type="chain" id="PRO_0000225182" description="Crossover junction endodeoxyribonuclease RuvC">
    <location>
        <begin position="1"/>
        <end position="182"/>
    </location>
</feature>
<feature type="active site" evidence="1">
    <location>
        <position position="7"/>
    </location>
</feature>
<feature type="active site" evidence="1">
    <location>
        <position position="68"/>
    </location>
</feature>
<feature type="active site" evidence="1">
    <location>
        <position position="141"/>
    </location>
</feature>
<feature type="binding site" evidence="1">
    <location>
        <position position="7"/>
    </location>
    <ligand>
        <name>Mg(2+)</name>
        <dbReference type="ChEBI" id="CHEBI:18420"/>
        <label>1</label>
    </ligand>
</feature>
<feature type="binding site" evidence="1">
    <location>
        <position position="68"/>
    </location>
    <ligand>
        <name>Mg(2+)</name>
        <dbReference type="ChEBI" id="CHEBI:18420"/>
        <label>2</label>
    </ligand>
</feature>
<feature type="binding site" evidence="1">
    <location>
        <position position="141"/>
    </location>
    <ligand>
        <name>Mg(2+)</name>
        <dbReference type="ChEBI" id="CHEBI:18420"/>
        <label>1</label>
    </ligand>
</feature>
<sequence length="182" mass="19280">MRVLGIDPGLTRCGIGVVDGAVGAPLTMVAAGAVRTLADEELPARLLGIEKGIEQWLDDYQPDAVAVERVFAQHNVRTVMGTAQASAIAVVCAARRGLPVSLHTPSEVKAAITGSGRADKAQVGTMVARILRLDSPPRPADAADAVALAICYLWRGSAQERIARARQKFARTIELARQRHGL</sequence>
<name>RUVC_THEFY</name>
<gene>
    <name evidence="1" type="primary">ruvC</name>
    <name type="ordered locus">Tfu_2095</name>
</gene>
<reference key="1">
    <citation type="journal article" date="2007" name="J. Bacteriol.">
        <title>Genome sequence and analysis of the soil cellulolytic actinomycete Thermobifida fusca YX.</title>
        <authorList>
            <person name="Lykidis A."/>
            <person name="Mavromatis K."/>
            <person name="Ivanova N."/>
            <person name="Anderson I."/>
            <person name="Land M."/>
            <person name="DiBartolo G."/>
            <person name="Martinez M."/>
            <person name="Lapidus A."/>
            <person name="Lucas S."/>
            <person name="Copeland A."/>
            <person name="Richardson P."/>
            <person name="Wilson D.B."/>
            <person name="Kyrpides N."/>
        </authorList>
    </citation>
    <scope>NUCLEOTIDE SEQUENCE [LARGE SCALE GENOMIC DNA]</scope>
    <source>
        <strain>YX</strain>
    </source>
</reference>
<evidence type="ECO:0000255" key="1">
    <source>
        <dbReference type="HAMAP-Rule" id="MF_00034"/>
    </source>
</evidence>
<organism>
    <name type="scientific">Thermobifida fusca (strain YX)</name>
    <dbReference type="NCBI Taxonomy" id="269800"/>
    <lineage>
        <taxon>Bacteria</taxon>
        <taxon>Bacillati</taxon>
        <taxon>Actinomycetota</taxon>
        <taxon>Actinomycetes</taxon>
        <taxon>Streptosporangiales</taxon>
        <taxon>Nocardiopsidaceae</taxon>
        <taxon>Thermobifida</taxon>
    </lineage>
</organism>
<keyword id="KW-0963">Cytoplasm</keyword>
<keyword id="KW-0227">DNA damage</keyword>
<keyword id="KW-0233">DNA recombination</keyword>
<keyword id="KW-0234">DNA repair</keyword>
<keyword id="KW-0238">DNA-binding</keyword>
<keyword id="KW-0255">Endonuclease</keyword>
<keyword id="KW-0378">Hydrolase</keyword>
<keyword id="KW-0460">Magnesium</keyword>
<keyword id="KW-0479">Metal-binding</keyword>
<keyword id="KW-0540">Nuclease</keyword>
<comment type="function">
    <text evidence="1">The RuvA-RuvB-RuvC complex processes Holliday junction (HJ) DNA during genetic recombination and DNA repair. Endonuclease that resolves HJ intermediates. Cleaves cruciform DNA by making single-stranded nicks across the HJ at symmetrical positions within the homologous arms, yielding a 5'-phosphate and a 3'-hydroxyl group; requires a central core of homology in the junction. The consensus cleavage sequence is 5'-(A/T)TT(C/G)-3'. Cleavage occurs on the 3'-side of the TT dinucleotide at the point of strand exchange. HJ branch migration catalyzed by RuvA-RuvB allows RuvC to scan DNA until it finds its consensus sequence, where it cleaves and resolves the cruciform DNA.</text>
</comment>
<comment type="catalytic activity">
    <reaction evidence="1">
        <text>Endonucleolytic cleavage at a junction such as a reciprocal single-stranded crossover between two homologous DNA duplexes (Holliday junction).</text>
        <dbReference type="EC" id="3.1.21.10"/>
    </reaction>
</comment>
<comment type="cofactor">
    <cofactor evidence="1">
        <name>Mg(2+)</name>
        <dbReference type="ChEBI" id="CHEBI:18420"/>
    </cofactor>
    <text evidence="1">Binds 2 Mg(2+) ion per subunit.</text>
</comment>
<comment type="subunit">
    <text evidence="1">Homodimer which binds Holliday junction (HJ) DNA. The HJ becomes 2-fold symmetrical on binding to RuvC with unstacked arms; it has a different conformation from HJ DNA in complex with RuvA. In the full resolvosome a probable DNA-RuvA(4)-RuvB(12)-RuvC(2) complex forms which resolves the HJ.</text>
</comment>
<comment type="subcellular location">
    <subcellularLocation>
        <location evidence="1">Cytoplasm</location>
    </subcellularLocation>
</comment>
<comment type="similarity">
    <text evidence="1">Belongs to the RuvC family.</text>
</comment>
<proteinExistence type="inferred from homology"/>
<accession>Q47N41</accession>
<dbReference type="EC" id="3.1.21.10" evidence="1"/>
<dbReference type="EMBL" id="CP000088">
    <property type="protein sequence ID" value="AAZ56128.1"/>
    <property type="molecule type" value="Genomic_DNA"/>
</dbReference>
<dbReference type="RefSeq" id="WP_011292518.1">
    <property type="nucleotide sequence ID" value="NC_007333.1"/>
</dbReference>
<dbReference type="SMR" id="Q47N41"/>
<dbReference type="STRING" id="269800.Tfu_2095"/>
<dbReference type="KEGG" id="tfu:Tfu_2095"/>
<dbReference type="eggNOG" id="COG0817">
    <property type="taxonomic scope" value="Bacteria"/>
</dbReference>
<dbReference type="HOGENOM" id="CLU_091257_0_2_11"/>
<dbReference type="OrthoDB" id="9805499at2"/>
<dbReference type="GO" id="GO:0005737">
    <property type="term" value="C:cytoplasm"/>
    <property type="evidence" value="ECO:0007669"/>
    <property type="project" value="UniProtKB-SubCell"/>
</dbReference>
<dbReference type="GO" id="GO:0048476">
    <property type="term" value="C:Holliday junction resolvase complex"/>
    <property type="evidence" value="ECO:0007669"/>
    <property type="project" value="UniProtKB-UniRule"/>
</dbReference>
<dbReference type="GO" id="GO:0008821">
    <property type="term" value="F:crossover junction DNA endonuclease activity"/>
    <property type="evidence" value="ECO:0007669"/>
    <property type="project" value="UniProtKB-UniRule"/>
</dbReference>
<dbReference type="GO" id="GO:0003677">
    <property type="term" value="F:DNA binding"/>
    <property type="evidence" value="ECO:0007669"/>
    <property type="project" value="UniProtKB-KW"/>
</dbReference>
<dbReference type="GO" id="GO:0000287">
    <property type="term" value="F:magnesium ion binding"/>
    <property type="evidence" value="ECO:0007669"/>
    <property type="project" value="UniProtKB-UniRule"/>
</dbReference>
<dbReference type="GO" id="GO:0006310">
    <property type="term" value="P:DNA recombination"/>
    <property type="evidence" value="ECO:0007669"/>
    <property type="project" value="UniProtKB-UniRule"/>
</dbReference>
<dbReference type="GO" id="GO:0006281">
    <property type="term" value="P:DNA repair"/>
    <property type="evidence" value="ECO:0007669"/>
    <property type="project" value="UniProtKB-UniRule"/>
</dbReference>
<dbReference type="CDD" id="cd16962">
    <property type="entry name" value="RuvC"/>
    <property type="match status" value="1"/>
</dbReference>
<dbReference type="FunFam" id="3.30.420.10:FF:000002">
    <property type="entry name" value="Crossover junction endodeoxyribonuclease RuvC"/>
    <property type="match status" value="1"/>
</dbReference>
<dbReference type="Gene3D" id="3.30.420.10">
    <property type="entry name" value="Ribonuclease H-like superfamily/Ribonuclease H"/>
    <property type="match status" value="1"/>
</dbReference>
<dbReference type="HAMAP" id="MF_00034">
    <property type="entry name" value="RuvC"/>
    <property type="match status" value="1"/>
</dbReference>
<dbReference type="InterPro" id="IPR012337">
    <property type="entry name" value="RNaseH-like_sf"/>
</dbReference>
<dbReference type="InterPro" id="IPR036397">
    <property type="entry name" value="RNaseH_sf"/>
</dbReference>
<dbReference type="InterPro" id="IPR020563">
    <property type="entry name" value="X-over_junc_endoDNase_Mg_BS"/>
</dbReference>
<dbReference type="InterPro" id="IPR002176">
    <property type="entry name" value="X-over_junc_endoDNase_RuvC"/>
</dbReference>
<dbReference type="NCBIfam" id="TIGR00228">
    <property type="entry name" value="ruvC"/>
    <property type="match status" value="1"/>
</dbReference>
<dbReference type="PANTHER" id="PTHR30194">
    <property type="entry name" value="CROSSOVER JUNCTION ENDODEOXYRIBONUCLEASE RUVC"/>
    <property type="match status" value="1"/>
</dbReference>
<dbReference type="PANTHER" id="PTHR30194:SF3">
    <property type="entry name" value="CROSSOVER JUNCTION ENDODEOXYRIBONUCLEASE RUVC"/>
    <property type="match status" value="1"/>
</dbReference>
<dbReference type="Pfam" id="PF02075">
    <property type="entry name" value="RuvC"/>
    <property type="match status" value="1"/>
</dbReference>
<dbReference type="PRINTS" id="PR00696">
    <property type="entry name" value="RSOLVASERUVC"/>
</dbReference>
<dbReference type="SUPFAM" id="SSF53098">
    <property type="entry name" value="Ribonuclease H-like"/>
    <property type="match status" value="1"/>
</dbReference>
<dbReference type="PROSITE" id="PS01321">
    <property type="entry name" value="RUVC"/>
    <property type="match status" value="1"/>
</dbReference>